<feature type="chain" id="PRO_0000144608" description="A-type ATP synthase subunit A">
    <location>
        <begin position="1"/>
        <end position="585"/>
    </location>
</feature>
<feature type="binding site" evidence="1">
    <location>
        <begin position="231"/>
        <end position="238"/>
    </location>
    <ligand>
        <name>ATP</name>
        <dbReference type="ChEBI" id="CHEBI:30616"/>
    </ligand>
</feature>
<protein>
    <recommendedName>
        <fullName evidence="1">A-type ATP synthase subunit A</fullName>
        <ecNumber evidence="1">7.1.2.2</ecNumber>
    </recommendedName>
</protein>
<proteinExistence type="inferred from homology"/>
<reference key="1">
    <citation type="journal article" date="1997" name="Biochim. Biophys. Acta">
        <title>Alpha- and beta-subunits of a V-type membrane ATPase in a hyperthermophilic sulfur-dependent archaeum, Thermococcus sp. KI.</title>
        <authorList>
            <person name="Iida T."/>
            <person name="Kanai S."/>
            <person name="Inatomi K."/>
            <person name="Kamagata Y."/>
            <person name="Maruyama T."/>
        </authorList>
    </citation>
    <scope>NUCLEOTIDE SEQUENCE [GENOMIC DNA]</scope>
</reference>
<accession>O32466</accession>
<sequence length="585" mass="65485">MGRIIRVTGPLVVADGMKGAKMYEVVRVGEMGLIGEIIRLEGDKAVIQVYEETAGIRPGEPVEGTGSSLSVELGPGLLTSMYDGIQRPLDVLRQLSGDFIARGLTAPALPRDKKWHFTPKVKVGDKVVGGDILGVVPETSIIEHKILVPPWVEGEIVEIAEEGDYTVEEVIVKVKKPDGTIEELKMYHRWPVRVKRPYKQKLPPEVPLITGQRTIDTFFSQAKGGTAAIPGPFGSGKTVTQHQLAKWSDAQVVVYIGCGERGNEMTDVLEEFPKLKDPKTGKPLMERTVLIANTSNMPVAAREASIYTGITIAEYFRDQGYDVALMADSTSRWAEALREISGRLEEMPGEEGYPAYLASKIAEFYERAGRVITLGSDERVGSVSVIGAVSPPGGDFSEPVVQNTLRVVKVFWALDADLARRRHFPAINWLRSYSLYVDAIQDWWHKNVDPEWRKMRDTAMALLQKEAELQEIVRIVGPDALPDREKAILIVTRMLREDYLQQDAFDEVDTYCPPKKQVTMMRVILNFYEKTMQAVDRGVPVDEIAKLPVREKIGRMKFEPDVEKVRALIDETNQQFEELFKKYGA</sequence>
<name>AATA_THESI</name>
<evidence type="ECO:0000255" key="1">
    <source>
        <dbReference type="HAMAP-Rule" id="MF_00309"/>
    </source>
</evidence>
<keyword id="KW-0066">ATP synthesis</keyword>
<keyword id="KW-0067">ATP-binding</keyword>
<keyword id="KW-1003">Cell membrane</keyword>
<keyword id="KW-0375">Hydrogen ion transport</keyword>
<keyword id="KW-0406">Ion transport</keyword>
<keyword id="KW-0472">Membrane</keyword>
<keyword id="KW-0547">Nucleotide-binding</keyword>
<keyword id="KW-1278">Translocase</keyword>
<keyword id="KW-0813">Transport</keyword>
<organism>
    <name type="scientific">Thermococcus sp. (strain KI)</name>
    <dbReference type="NCBI Taxonomy" id="269443"/>
    <lineage>
        <taxon>Archaea</taxon>
        <taxon>Methanobacteriati</taxon>
        <taxon>Methanobacteriota</taxon>
        <taxon>Thermococci</taxon>
        <taxon>Thermococcales</taxon>
        <taxon>Thermococcaceae</taxon>
        <taxon>Thermococcus</taxon>
    </lineage>
</organism>
<comment type="function">
    <text>Produces ATP from ADP in the presence of a proton gradient across the membrane. The archaeal alpha chain is a catalytic subunit.</text>
</comment>
<comment type="function">
    <text evidence="1">Component of the A-type ATP synthase that produces ATP from ADP in the presence of a proton gradient across the membrane. The A chain is the catalytic subunit.</text>
</comment>
<comment type="catalytic activity">
    <reaction evidence="1">
        <text>ATP + H2O + 4 H(+)(in) = ADP + phosphate + 5 H(+)(out)</text>
        <dbReference type="Rhea" id="RHEA:57720"/>
        <dbReference type="ChEBI" id="CHEBI:15377"/>
        <dbReference type="ChEBI" id="CHEBI:15378"/>
        <dbReference type="ChEBI" id="CHEBI:30616"/>
        <dbReference type="ChEBI" id="CHEBI:43474"/>
        <dbReference type="ChEBI" id="CHEBI:456216"/>
        <dbReference type="EC" id="7.1.2.2"/>
    </reaction>
</comment>
<comment type="subunit">
    <text evidence="1">Has multiple subunits with at least A(3), B(3), C, D, E, F, H, I and proteolipid K(x).</text>
</comment>
<comment type="subcellular location">
    <subcellularLocation>
        <location evidence="1">Cell membrane</location>
        <topology evidence="1">Peripheral membrane protein</topology>
    </subcellularLocation>
</comment>
<comment type="similarity">
    <text evidence="1">Belongs to the ATPase alpha/beta chains family.</text>
</comment>
<gene>
    <name evidence="1" type="primary">atpA</name>
</gene>
<dbReference type="EC" id="7.1.2.2" evidence="1"/>
<dbReference type="EMBL" id="D88772">
    <property type="protein sequence ID" value="BAA23342.1"/>
    <property type="molecule type" value="Genomic_DNA"/>
</dbReference>
<dbReference type="PIR" id="T44309">
    <property type="entry name" value="T44309"/>
</dbReference>
<dbReference type="SMR" id="O32466"/>
<dbReference type="GO" id="GO:0005886">
    <property type="term" value="C:plasma membrane"/>
    <property type="evidence" value="ECO:0007669"/>
    <property type="project" value="UniProtKB-SubCell"/>
</dbReference>
<dbReference type="GO" id="GO:0033178">
    <property type="term" value="C:proton-transporting two-sector ATPase complex, catalytic domain"/>
    <property type="evidence" value="ECO:0007669"/>
    <property type="project" value="InterPro"/>
</dbReference>
<dbReference type="GO" id="GO:0005524">
    <property type="term" value="F:ATP binding"/>
    <property type="evidence" value="ECO:0007669"/>
    <property type="project" value="UniProtKB-UniRule"/>
</dbReference>
<dbReference type="GO" id="GO:0016887">
    <property type="term" value="F:ATP hydrolysis activity"/>
    <property type="evidence" value="ECO:0007669"/>
    <property type="project" value="InterPro"/>
</dbReference>
<dbReference type="GO" id="GO:0046933">
    <property type="term" value="F:proton-transporting ATP synthase activity, rotational mechanism"/>
    <property type="evidence" value="ECO:0007669"/>
    <property type="project" value="UniProtKB-UniRule"/>
</dbReference>
<dbReference type="GO" id="GO:0046961">
    <property type="term" value="F:proton-transporting ATPase activity, rotational mechanism"/>
    <property type="evidence" value="ECO:0007669"/>
    <property type="project" value="InterPro"/>
</dbReference>
<dbReference type="GO" id="GO:0042777">
    <property type="term" value="P:proton motive force-driven plasma membrane ATP synthesis"/>
    <property type="evidence" value="ECO:0007669"/>
    <property type="project" value="UniProtKB-UniRule"/>
</dbReference>
<dbReference type="CDD" id="cd18111">
    <property type="entry name" value="ATP-synt_V_A-type_alpha_C"/>
    <property type="match status" value="1"/>
</dbReference>
<dbReference type="CDD" id="cd18119">
    <property type="entry name" value="ATP-synt_V_A-type_alpha_N"/>
    <property type="match status" value="1"/>
</dbReference>
<dbReference type="CDD" id="cd01134">
    <property type="entry name" value="V_A-ATPase_A"/>
    <property type="match status" value="1"/>
</dbReference>
<dbReference type="FunFam" id="3.40.50.300:FF:000675">
    <property type="entry name" value="V-type ATP synthase alpha chain"/>
    <property type="match status" value="1"/>
</dbReference>
<dbReference type="FunFam" id="1.10.1140.10:FF:000002">
    <property type="entry name" value="V-type proton ATPase catalytic subunit A"/>
    <property type="match status" value="1"/>
</dbReference>
<dbReference type="FunFam" id="2.40.30.20:FF:000002">
    <property type="entry name" value="V-type proton ATPase catalytic subunit A"/>
    <property type="match status" value="1"/>
</dbReference>
<dbReference type="FunFam" id="2.40.50.100:FF:000008">
    <property type="entry name" value="V-type proton ATPase catalytic subunit A"/>
    <property type="match status" value="1"/>
</dbReference>
<dbReference type="Gene3D" id="2.40.30.20">
    <property type="match status" value="1"/>
</dbReference>
<dbReference type="Gene3D" id="2.40.50.100">
    <property type="match status" value="1"/>
</dbReference>
<dbReference type="Gene3D" id="1.10.1140.10">
    <property type="entry name" value="Bovine Mitochondrial F1-atpase, Atp Synthase Beta Chain, Chain D, domain 3"/>
    <property type="match status" value="1"/>
</dbReference>
<dbReference type="Gene3D" id="3.40.50.300">
    <property type="entry name" value="P-loop containing nucleotide triphosphate hydrolases"/>
    <property type="match status" value="1"/>
</dbReference>
<dbReference type="HAMAP" id="MF_00309">
    <property type="entry name" value="ATP_synth_A_arch"/>
    <property type="match status" value="1"/>
</dbReference>
<dbReference type="InterPro" id="IPR003593">
    <property type="entry name" value="AAA+_ATPase"/>
</dbReference>
<dbReference type="InterPro" id="IPR055190">
    <property type="entry name" value="ATP-synt_VA_C"/>
</dbReference>
<dbReference type="InterPro" id="IPR031686">
    <property type="entry name" value="ATP-synth_a_Xtn"/>
</dbReference>
<dbReference type="InterPro" id="IPR023366">
    <property type="entry name" value="ATP_synth_asu-like_sf"/>
</dbReference>
<dbReference type="InterPro" id="IPR005726">
    <property type="entry name" value="ATP_synth_asu_arc"/>
</dbReference>
<dbReference type="InterPro" id="IPR020003">
    <property type="entry name" value="ATPase_a/bsu_AS"/>
</dbReference>
<dbReference type="InterPro" id="IPR004100">
    <property type="entry name" value="ATPase_F1/V1/A1_a/bsu_N"/>
</dbReference>
<dbReference type="InterPro" id="IPR036121">
    <property type="entry name" value="ATPase_F1/V1/A1_a/bsu_N_sf"/>
</dbReference>
<dbReference type="InterPro" id="IPR000194">
    <property type="entry name" value="ATPase_F1/V1/A1_a/bsu_nucl-bd"/>
</dbReference>
<dbReference type="InterPro" id="IPR024034">
    <property type="entry name" value="ATPase_F1/V1_b/a_C"/>
</dbReference>
<dbReference type="InterPro" id="IPR027417">
    <property type="entry name" value="P-loop_NTPase"/>
</dbReference>
<dbReference type="InterPro" id="IPR022878">
    <property type="entry name" value="V-ATPase_asu"/>
</dbReference>
<dbReference type="NCBIfam" id="TIGR01043">
    <property type="entry name" value="ATP_syn_A_arch"/>
    <property type="match status" value="1"/>
</dbReference>
<dbReference type="NCBIfam" id="NF003220">
    <property type="entry name" value="PRK04192.1"/>
    <property type="match status" value="1"/>
</dbReference>
<dbReference type="PANTHER" id="PTHR43607:SF1">
    <property type="entry name" value="H(+)-TRANSPORTING TWO-SECTOR ATPASE"/>
    <property type="match status" value="1"/>
</dbReference>
<dbReference type="PANTHER" id="PTHR43607">
    <property type="entry name" value="V-TYPE PROTON ATPASE CATALYTIC SUBUNIT A"/>
    <property type="match status" value="1"/>
</dbReference>
<dbReference type="Pfam" id="PF00006">
    <property type="entry name" value="ATP-synt_ab"/>
    <property type="match status" value="1"/>
</dbReference>
<dbReference type="Pfam" id="PF02874">
    <property type="entry name" value="ATP-synt_ab_N"/>
    <property type="match status" value="1"/>
</dbReference>
<dbReference type="Pfam" id="PF16886">
    <property type="entry name" value="ATP-synt_ab_Xtn"/>
    <property type="match status" value="1"/>
</dbReference>
<dbReference type="Pfam" id="PF22919">
    <property type="entry name" value="ATP-synt_VA_C"/>
    <property type="match status" value="1"/>
</dbReference>
<dbReference type="SMART" id="SM00382">
    <property type="entry name" value="AAA"/>
    <property type="match status" value="1"/>
</dbReference>
<dbReference type="SUPFAM" id="SSF47917">
    <property type="entry name" value="C-terminal domain of alpha and beta subunits of F1 ATP synthase"/>
    <property type="match status" value="1"/>
</dbReference>
<dbReference type="SUPFAM" id="SSF50615">
    <property type="entry name" value="N-terminal domain of alpha and beta subunits of F1 ATP synthase"/>
    <property type="match status" value="1"/>
</dbReference>
<dbReference type="SUPFAM" id="SSF52540">
    <property type="entry name" value="P-loop containing nucleoside triphosphate hydrolases"/>
    <property type="match status" value="1"/>
</dbReference>
<dbReference type="PROSITE" id="PS00152">
    <property type="entry name" value="ATPASE_ALPHA_BETA"/>
    <property type="match status" value="1"/>
</dbReference>